<comment type="function">
    <text evidence="1">DNA-dependent RNA polymerase catalyzes the transcription of DNA into RNA using the four ribonucleoside triphosphates as substrates.</text>
</comment>
<comment type="catalytic activity">
    <reaction evidence="1">
        <text>RNA(n) + a ribonucleoside 5'-triphosphate = RNA(n+1) + diphosphate</text>
        <dbReference type="Rhea" id="RHEA:21248"/>
        <dbReference type="Rhea" id="RHEA-COMP:14527"/>
        <dbReference type="Rhea" id="RHEA-COMP:17342"/>
        <dbReference type="ChEBI" id="CHEBI:33019"/>
        <dbReference type="ChEBI" id="CHEBI:61557"/>
        <dbReference type="ChEBI" id="CHEBI:140395"/>
        <dbReference type="EC" id="2.7.7.6"/>
    </reaction>
</comment>
<comment type="subunit">
    <text evidence="1">The RNAP catalytic core consists of 2 alpha, 1 beta, 1 beta' and 1 omega subunit. When a sigma factor is associated with the core the holoenzyme is formed, which can initiate transcription.</text>
</comment>
<comment type="similarity">
    <text evidence="1">Belongs to the RNA polymerase beta chain family.</text>
</comment>
<accession>P19175</accession>
<name>RPOB_PSEPU</name>
<feature type="chain" id="PRO_0000047942" description="DNA-directed RNA polymerase subunit beta">
    <location>
        <begin position="1"/>
        <end position="1357"/>
    </location>
</feature>
<feature type="sequence conflict" description="In Ref. 2; AAA25986." evidence="2" ref="2">
    <original>T</original>
    <variation>N</variation>
    <location>
        <position position="1180"/>
    </location>
</feature>
<feature type="sequence conflict" description="In Ref. 2; AAA25986." evidence="2" ref="2">
    <original>I</original>
    <variation>V</variation>
    <location>
        <position position="1184"/>
    </location>
</feature>
<feature type="sequence conflict" description="In Ref. 2; AAA25986." evidence="2" ref="2">
    <original>F</original>
    <variation>S</variation>
    <location>
        <position position="1236"/>
    </location>
</feature>
<organism>
    <name type="scientific">Pseudomonas putida</name>
    <name type="common">Arthrobacter siderocapsulatus</name>
    <dbReference type="NCBI Taxonomy" id="303"/>
    <lineage>
        <taxon>Bacteria</taxon>
        <taxon>Pseudomonadati</taxon>
        <taxon>Pseudomonadota</taxon>
        <taxon>Gammaproteobacteria</taxon>
        <taxon>Pseudomonadales</taxon>
        <taxon>Pseudomonadaceae</taxon>
        <taxon>Pseudomonas</taxon>
    </lineage>
</organism>
<evidence type="ECO:0000255" key="1">
    <source>
        <dbReference type="HAMAP-Rule" id="MF_01321"/>
    </source>
</evidence>
<evidence type="ECO:0000305" key="2"/>
<sequence>MAYSYTEKKRIRKDFSKLPDVMDVPYLLAIQLDSYREFLQAGSIQGSLPRRRLHAAFKSVFPIISYSGNAALEYVGYRLGEPAFDVKECVLRGVTFAVPLRVKVRLIIFDKESSNKAIKDIKEQEVYMGEIPLMTENGTFVINGTERVIVSQMHRSPGVFFDHDRGKTHSSGKLLYSARIIPYRGSWLDFEFDPKDCVFVRIDRRRKLPASVLLRALGYSTEEVLNTFYTTNVFHISGEKLSLELVPQRLAGEVAVMDIHDETGKVIVEQGRRITARHINQLEKAGVKQLDVPMEYVLGRTTAKAIVHPATGEILAECNTEMTTELLIKVAKAQVVRIETLYTNDIDCGPFISDTLKIDTTSNQLEALVEIYRMMRPGEPPTKDAAETLFNNLFFSAERYDLSPLGRMKFNRRIGRTEIEGSGVLSKEDIVEVLKTLVDIRNGKGIVDDIDHLGNRRVRCVGEMAENQFRVGLVRVERAVKERLSMAESEGLMPQDLINAKPVAAAVKEFFGSSQLSQFMDQNNPLSEITHKRRCSALGPGGLTRERAGFEVRDVHPTHYGRVCPIETPEGPNIGLINSLAAYARTNQYGFLESPYRVVKEGVVSDDIVFLSAIEEADHVIAQASAAMNDKKQLIDELVAVRHLNEFTVKAPEDVTLMDVSPKQVVSVAASLIPFLEHDDANRALMGSNMQRQAVPTLRADKPLVGTGMERNVARDSGVCVVRRRGGVIDSVDASRIVVRVADDEVETGERRVDIYNLTKYTRSNQNTCINQRPLVSKGDKVQRGDIMADRASTDMGELALGQNMRIAFMAWNGFNFEDSICLSERVVQEDRFTTIHIQELTCVARDNKLGPREITSGIPNVGEAALNKLDEAGIVYVGAEVGAGDILVGKVTPKGHTQLTPEEKLLRAIFGEKASDVKDTSLRVPTGTQGTVIDVQVFTRDGVERDSRALAIEKMQLDEIPQDLNEEFRIVEGATFERLRSALNGQVVDGGAGLKKGTVITDEVLDGLDDGQWFKLRMAEDALNEQLEKAQQYIVDRRRLLDDKFEDKKRNVQQGDDLAPGVLKIVKVYLAIRRRIQPGDKMAGRHGNKGVVSVIMPVEDMPHDANGTPVDVVLNPLGVPSRMNVGQILETHLGLAAKGLGEKIDRMLEEQRKAAELRVFLTEVYNEIGGRQENLDEFTDEEILALANNLKKGVPMATPVFDGAKEREIKAMLKLADLPESGQMVLFDGRTRNKFERPVTVGYMYMLKLNHLVDDKMHARSTGSYSLVTQQPLGGKAQFGGQRFGEMEVWALEAYGAAYTLQEMLTVKSDDVNGRTKMYKNIVDGDHRMEPGMAESFNVLIKEIRSLGIDIDLETE</sequence>
<protein>
    <recommendedName>
        <fullName evidence="1">DNA-directed RNA polymerase subunit beta</fullName>
        <shortName evidence="1">RNAP subunit beta</shortName>
        <ecNumber evidence="1">2.7.7.6</ecNumber>
    </recommendedName>
    <alternativeName>
        <fullName evidence="1">RNA polymerase subunit beta</fullName>
    </alternativeName>
    <alternativeName>
        <fullName evidence="1">Transcriptase subunit beta</fullName>
    </alternativeName>
</protein>
<dbReference type="EC" id="2.7.7.6" evidence="1"/>
<dbReference type="EMBL" id="X15849">
    <property type="protein sequence ID" value="CAA33846.1"/>
    <property type="molecule type" value="Genomic_DNA"/>
</dbReference>
<dbReference type="EMBL" id="M38319">
    <property type="protein sequence ID" value="AAA25986.1"/>
    <property type="molecule type" value="Genomic_DNA"/>
</dbReference>
<dbReference type="PIR" id="JN0419">
    <property type="entry name" value="JN0419"/>
</dbReference>
<dbReference type="SMR" id="P19175"/>
<dbReference type="eggNOG" id="COG0085">
    <property type="taxonomic scope" value="Bacteria"/>
</dbReference>
<dbReference type="GO" id="GO:0000428">
    <property type="term" value="C:DNA-directed RNA polymerase complex"/>
    <property type="evidence" value="ECO:0007669"/>
    <property type="project" value="UniProtKB-KW"/>
</dbReference>
<dbReference type="GO" id="GO:0003677">
    <property type="term" value="F:DNA binding"/>
    <property type="evidence" value="ECO:0007669"/>
    <property type="project" value="UniProtKB-UniRule"/>
</dbReference>
<dbReference type="GO" id="GO:0003899">
    <property type="term" value="F:DNA-directed RNA polymerase activity"/>
    <property type="evidence" value="ECO:0007669"/>
    <property type="project" value="UniProtKB-UniRule"/>
</dbReference>
<dbReference type="GO" id="GO:0032549">
    <property type="term" value="F:ribonucleoside binding"/>
    <property type="evidence" value="ECO:0007669"/>
    <property type="project" value="InterPro"/>
</dbReference>
<dbReference type="GO" id="GO:0006351">
    <property type="term" value="P:DNA-templated transcription"/>
    <property type="evidence" value="ECO:0007669"/>
    <property type="project" value="UniProtKB-UniRule"/>
</dbReference>
<dbReference type="CDD" id="cd00653">
    <property type="entry name" value="RNA_pol_B_RPB2"/>
    <property type="match status" value="1"/>
</dbReference>
<dbReference type="FunFam" id="2.40.50.100:FF:000006">
    <property type="entry name" value="DNA-directed RNA polymerase subunit beta"/>
    <property type="match status" value="1"/>
</dbReference>
<dbReference type="FunFam" id="3.90.1110.10:FF:000001">
    <property type="entry name" value="DNA-directed RNA polymerase subunit beta"/>
    <property type="match status" value="1"/>
</dbReference>
<dbReference type="FunFam" id="3.90.1110.10:FF:000004">
    <property type="entry name" value="DNA-directed RNA polymerase subunit beta"/>
    <property type="match status" value="1"/>
</dbReference>
<dbReference type="FunFam" id="3.90.1800.10:FF:000001">
    <property type="entry name" value="DNA-directed RNA polymerase subunit beta"/>
    <property type="match status" value="1"/>
</dbReference>
<dbReference type="Gene3D" id="2.40.50.100">
    <property type="match status" value="1"/>
</dbReference>
<dbReference type="Gene3D" id="2.40.50.150">
    <property type="match status" value="1"/>
</dbReference>
<dbReference type="Gene3D" id="3.90.1100.10">
    <property type="match status" value="2"/>
</dbReference>
<dbReference type="Gene3D" id="2.30.150.10">
    <property type="entry name" value="DNA-directed RNA polymerase, beta subunit, external 1 domain"/>
    <property type="match status" value="1"/>
</dbReference>
<dbReference type="Gene3D" id="2.40.270.10">
    <property type="entry name" value="DNA-directed RNA polymerase, subunit 2, domain 6"/>
    <property type="match status" value="2"/>
</dbReference>
<dbReference type="Gene3D" id="3.90.1800.10">
    <property type="entry name" value="RNA polymerase alpha subunit dimerisation domain"/>
    <property type="match status" value="1"/>
</dbReference>
<dbReference type="Gene3D" id="3.90.1110.10">
    <property type="entry name" value="RNA polymerase Rpb2, domain 2"/>
    <property type="match status" value="2"/>
</dbReference>
<dbReference type="HAMAP" id="MF_01321">
    <property type="entry name" value="RNApol_bact_RpoB"/>
    <property type="match status" value="1"/>
</dbReference>
<dbReference type="InterPro" id="IPR042107">
    <property type="entry name" value="DNA-dir_RNA_pol_bsu_ext_1_sf"/>
</dbReference>
<dbReference type="InterPro" id="IPR019462">
    <property type="entry name" value="DNA-dir_RNA_pol_bsu_external_1"/>
</dbReference>
<dbReference type="InterPro" id="IPR015712">
    <property type="entry name" value="DNA-dir_RNA_pol_su2"/>
</dbReference>
<dbReference type="InterPro" id="IPR007120">
    <property type="entry name" value="DNA-dir_RNAP_su2_dom"/>
</dbReference>
<dbReference type="InterPro" id="IPR037033">
    <property type="entry name" value="DNA-dir_RNAP_su2_hyb_sf"/>
</dbReference>
<dbReference type="InterPro" id="IPR010243">
    <property type="entry name" value="RNA_pol_bsu_bac"/>
</dbReference>
<dbReference type="InterPro" id="IPR007121">
    <property type="entry name" value="RNA_pol_bsu_CS"/>
</dbReference>
<dbReference type="InterPro" id="IPR007644">
    <property type="entry name" value="RNA_pol_bsu_protrusion"/>
</dbReference>
<dbReference type="InterPro" id="IPR007642">
    <property type="entry name" value="RNA_pol_Rpb2_2"/>
</dbReference>
<dbReference type="InterPro" id="IPR037034">
    <property type="entry name" value="RNA_pol_Rpb2_2_sf"/>
</dbReference>
<dbReference type="InterPro" id="IPR007645">
    <property type="entry name" value="RNA_pol_Rpb2_3"/>
</dbReference>
<dbReference type="InterPro" id="IPR007641">
    <property type="entry name" value="RNA_pol_Rpb2_7"/>
</dbReference>
<dbReference type="InterPro" id="IPR014724">
    <property type="entry name" value="RNA_pol_RPB2_OB-fold"/>
</dbReference>
<dbReference type="NCBIfam" id="NF001616">
    <property type="entry name" value="PRK00405.1"/>
    <property type="match status" value="1"/>
</dbReference>
<dbReference type="NCBIfam" id="TIGR02013">
    <property type="entry name" value="rpoB"/>
    <property type="match status" value="1"/>
</dbReference>
<dbReference type="PANTHER" id="PTHR20856">
    <property type="entry name" value="DNA-DIRECTED RNA POLYMERASE I SUBUNIT 2"/>
    <property type="match status" value="1"/>
</dbReference>
<dbReference type="Pfam" id="PF04563">
    <property type="entry name" value="RNA_pol_Rpb2_1"/>
    <property type="match status" value="1"/>
</dbReference>
<dbReference type="Pfam" id="PF04561">
    <property type="entry name" value="RNA_pol_Rpb2_2"/>
    <property type="match status" value="2"/>
</dbReference>
<dbReference type="Pfam" id="PF04565">
    <property type="entry name" value="RNA_pol_Rpb2_3"/>
    <property type="match status" value="1"/>
</dbReference>
<dbReference type="Pfam" id="PF10385">
    <property type="entry name" value="RNA_pol_Rpb2_45"/>
    <property type="match status" value="1"/>
</dbReference>
<dbReference type="Pfam" id="PF00562">
    <property type="entry name" value="RNA_pol_Rpb2_6"/>
    <property type="match status" value="1"/>
</dbReference>
<dbReference type="Pfam" id="PF04560">
    <property type="entry name" value="RNA_pol_Rpb2_7"/>
    <property type="match status" value="1"/>
</dbReference>
<dbReference type="SUPFAM" id="SSF64484">
    <property type="entry name" value="beta and beta-prime subunits of DNA dependent RNA-polymerase"/>
    <property type="match status" value="1"/>
</dbReference>
<dbReference type="PROSITE" id="PS01166">
    <property type="entry name" value="RNA_POL_BETA"/>
    <property type="match status" value="1"/>
</dbReference>
<reference key="1">
    <citation type="journal article" date="1988" name="Dokl. Biochem.">
        <title>Nucleotide sequence of the rpoB gene coding for the beta-subunit of RNA polymerase in Pseudomonas putida.</title>
        <authorList>
            <person name="Borodin A.M."/>
            <person name="Danilkovich A.V."/>
            <person name="Allikmets R.L."/>
            <person name="Rostapshov V.M."/>
            <person name="Chernov I.P."/>
            <person name="Azhikina T.L."/>
            <person name="Monastyrskaya S."/>
            <person name="Sverdlov D."/>
        </authorList>
    </citation>
    <scope>NUCLEOTIDE SEQUENCE [GENOMIC DNA]</scope>
</reference>
<reference key="2">
    <citation type="journal article" date="1988" name="Bioorg. Khim.">
        <title>Genes coding for RNA polymerase in bacteria. III. The use of modified Sanger's method for sequencing the C-terminal region of rpoB gene, N-terminal region of rpoC gene and intercistron region of RNA polymerase in Pseudomonas putida.</title>
        <authorList>
            <person name="Borodin A.M."/>
            <person name="Danilkovich A.V."/>
            <person name="Chernov I.P."/>
            <person name="Azhykina T.L."/>
            <person name="Rostapshov V.M."/>
            <person name="Monastyrskaya G.S."/>
        </authorList>
    </citation>
    <scope>NUCLEOTIDE SEQUENCE [GENOMIC DNA] OF 1036-1357</scope>
</reference>
<gene>
    <name evidence="1" type="primary">rpoB</name>
</gene>
<keyword id="KW-0240">DNA-directed RNA polymerase</keyword>
<keyword id="KW-0548">Nucleotidyltransferase</keyword>
<keyword id="KW-0804">Transcription</keyword>
<keyword id="KW-0808">Transferase</keyword>
<proteinExistence type="inferred from homology"/>